<organism>
    <name type="scientific">Gibberella zeae (strain ATCC MYA-4620 / CBS 123657 / FGSC 9075 / NRRL 31084 / PH-1)</name>
    <name type="common">Wheat head blight fungus</name>
    <name type="synonym">Fusarium graminearum</name>
    <dbReference type="NCBI Taxonomy" id="229533"/>
    <lineage>
        <taxon>Eukaryota</taxon>
        <taxon>Fungi</taxon>
        <taxon>Dikarya</taxon>
        <taxon>Ascomycota</taxon>
        <taxon>Pezizomycotina</taxon>
        <taxon>Sordariomycetes</taxon>
        <taxon>Hypocreomycetidae</taxon>
        <taxon>Hypocreales</taxon>
        <taxon>Nectriaceae</taxon>
        <taxon>Fusarium</taxon>
    </lineage>
</organism>
<name>SYM1_GIBZE</name>
<proteinExistence type="inferred from homology"/>
<feature type="chain" id="PRO_0000234412" description="Protein SYM1">
    <location>
        <begin position="1"/>
        <end position="175"/>
    </location>
</feature>
<feature type="transmembrane region" description="Helical" evidence="2">
    <location>
        <begin position="55"/>
        <end position="75"/>
    </location>
</feature>
<feature type="transmembrane region" description="Helical" evidence="2">
    <location>
        <begin position="92"/>
        <end position="112"/>
    </location>
</feature>
<feature type="transmembrane region" description="Helical" evidence="2">
    <location>
        <begin position="143"/>
        <end position="163"/>
    </location>
</feature>
<evidence type="ECO:0000250" key="1"/>
<evidence type="ECO:0000255" key="2"/>
<evidence type="ECO:0000305" key="3"/>
<gene>
    <name type="primary">SYM1</name>
    <name type="ORF">FGRRES_00730</name>
    <name type="ORF">FGSG_00730</name>
</gene>
<accession>Q4IPX8</accession>
<accession>A0A0E0RNA0</accession>
<accession>V6QUF3</accession>
<keyword id="KW-0472">Membrane</keyword>
<keyword id="KW-0496">Mitochondrion</keyword>
<keyword id="KW-0999">Mitochondrion inner membrane</keyword>
<keyword id="KW-1185">Reference proteome</keyword>
<keyword id="KW-0812">Transmembrane</keyword>
<keyword id="KW-1133">Transmembrane helix</keyword>
<comment type="function">
    <text evidence="1">May be involved in cellular response to stress. Required to maintain mitochondrial DNA (mtDNA) integrity and stability (By similarity).</text>
</comment>
<comment type="subcellular location">
    <subcellularLocation>
        <location evidence="1">Mitochondrion inner membrane</location>
        <topology evidence="1">Multi-pass membrane protein</topology>
    </subcellularLocation>
</comment>
<comment type="similarity">
    <text evidence="3">Belongs to the peroxisomal membrane protein PXMP2/4 family.</text>
</comment>
<protein>
    <recommendedName>
        <fullName>Protein SYM1</fullName>
    </recommendedName>
</protein>
<reference key="1">
    <citation type="journal article" date="2007" name="Science">
        <title>The Fusarium graminearum genome reveals a link between localized polymorphism and pathogen specialization.</title>
        <authorList>
            <person name="Cuomo C.A."/>
            <person name="Gueldener U."/>
            <person name="Xu J.-R."/>
            <person name="Trail F."/>
            <person name="Turgeon B.G."/>
            <person name="Di Pietro A."/>
            <person name="Walton J.D."/>
            <person name="Ma L.-J."/>
            <person name="Baker S.E."/>
            <person name="Rep M."/>
            <person name="Adam G."/>
            <person name="Antoniw J."/>
            <person name="Baldwin T."/>
            <person name="Calvo S.E."/>
            <person name="Chang Y.-L."/>
            <person name="DeCaprio D."/>
            <person name="Gale L.R."/>
            <person name="Gnerre S."/>
            <person name="Goswami R.S."/>
            <person name="Hammond-Kosack K."/>
            <person name="Harris L.J."/>
            <person name="Hilburn K."/>
            <person name="Kennell J.C."/>
            <person name="Kroken S."/>
            <person name="Magnuson J.K."/>
            <person name="Mannhaupt G."/>
            <person name="Mauceli E.W."/>
            <person name="Mewes H.-W."/>
            <person name="Mitterbauer R."/>
            <person name="Muehlbauer G."/>
            <person name="Muensterkoetter M."/>
            <person name="Nelson D."/>
            <person name="O'Donnell K."/>
            <person name="Ouellet T."/>
            <person name="Qi W."/>
            <person name="Quesneville H."/>
            <person name="Roncero M.I.G."/>
            <person name="Seong K.-Y."/>
            <person name="Tetko I.V."/>
            <person name="Urban M."/>
            <person name="Waalwijk C."/>
            <person name="Ward T.J."/>
            <person name="Yao J."/>
            <person name="Birren B.W."/>
            <person name="Kistler H.C."/>
        </authorList>
    </citation>
    <scope>NUCLEOTIDE SEQUENCE [LARGE SCALE GENOMIC DNA]</scope>
    <source>
        <strain>ATCC MYA-4620 / CBS 123657 / FGSC 9075 / NRRL 31084 / PH-1</strain>
    </source>
</reference>
<reference key="2">
    <citation type="journal article" date="2010" name="Nature">
        <title>Comparative genomics reveals mobile pathogenicity chromosomes in Fusarium.</title>
        <authorList>
            <person name="Ma L.-J."/>
            <person name="van der Does H.C."/>
            <person name="Borkovich K.A."/>
            <person name="Coleman J.J."/>
            <person name="Daboussi M.-J."/>
            <person name="Di Pietro A."/>
            <person name="Dufresne M."/>
            <person name="Freitag M."/>
            <person name="Grabherr M."/>
            <person name="Henrissat B."/>
            <person name="Houterman P.M."/>
            <person name="Kang S."/>
            <person name="Shim W.-B."/>
            <person name="Woloshuk C."/>
            <person name="Xie X."/>
            <person name="Xu J.-R."/>
            <person name="Antoniw J."/>
            <person name="Baker S.E."/>
            <person name="Bluhm B.H."/>
            <person name="Breakspear A."/>
            <person name="Brown D.W."/>
            <person name="Butchko R.A.E."/>
            <person name="Chapman S."/>
            <person name="Coulson R."/>
            <person name="Coutinho P.M."/>
            <person name="Danchin E.G.J."/>
            <person name="Diener A."/>
            <person name="Gale L.R."/>
            <person name="Gardiner D.M."/>
            <person name="Goff S."/>
            <person name="Hammond-Kosack K.E."/>
            <person name="Hilburn K."/>
            <person name="Hua-Van A."/>
            <person name="Jonkers W."/>
            <person name="Kazan K."/>
            <person name="Kodira C.D."/>
            <person name="Koehrsen M."/>
            <person name="Kumar L."/>
            <person name="Lee Y.-H."/>
            <person name="Li L."/>
            <person name="Manners J.M."/>
            <person name="Miranda-Saavedra D."/>
            <person name="Mukherjee M."/>
            <person name="Park G."/>
            <person name="Park J."/>
            <person name="Park S.-Y."/>
            <person name="Proctor R.H."/>
            <person name="Regev A."/>
            <person name="Ruiz-Roldan M.C."/>
            <person name="Sain D."/>
            <person name="Sakthikumar S."/>
            <person name="Sykes S."/>
            <person name="Schwartz D.C."/>
            <person name="Turgeon B.G."/>
            <person name="Wapinski I."/>
            <person name="Yoder O."/>
            <person name="Young S."/>
            <person name="Zeng Q."/>
            <person name="Zhou S."/>
            <person name="Galagan J."/>
            <person name="Cuomo C.A."/>
            <person name="Kistler H.C."/>
            <person name="Rep M."/>
        </authorList>
    </citation>
    <scope>GENOME REANNOTATION</scope>
    <source>
        <strain>ATCC MYA-4620 / CBS 123657 / FGSC 9075 / NRRL 31084 / PH-1</strain>
    </source>
</reference>
<reference key="3">
    <citation type="journal article" date="2015" name="BMC Genomics">
        <title>The completed genome sequence of the pathogenic ascomycete fungus Fusarium graminearum.</title>
        <authorList>
            <person name="King R."/>
            <person name="Urban M."/>
            <person name="Hammond-Kosack M.C.U."/>
            <person name="Hassani-Pak K."/>
            <person name="Hammond-Kosack K.E."/>
        </authorList>
    </citation>
    <scope>NUCLEOTIDE SEQUENCE [LARGE SCALE GENOMIC DNA]</scope>
    <source>
        <strain>ATCC MYA-4620 / CBS 123657 / FGSC 9075 / NRRL 31084 / PH-1</strain>
    </source>
</reference>
<sequence length="175" mass="19827">MSSFIRWYNSRLAARPLLTQSVTTAFLFATGDVTAQQLVEKRGAQKHDLVRTGRMALYGGFVFGPVATTWFAFLARRVNVRNNKKAEVLARVACDQLGFAPVMIGVFLSSMATMEGKSVKERIDKTWWPALKANWMVWPAVQVINFSLIPLQYRLFFANIIAIGWNSYLSWVNSQ</sequence>
<dbReference type="EMBL" id="DS231663">
    <property type="protein sequence ID" value="ESU05953.1"/>
    <property type="molecule type" value="Genomic_DNA"/>
</dbReference>
<dbReference type="EMBL" id="HG970332">
    <property type="protein sequence ID" value="CEF72725.1"/>
    <property type="molecule type" value="Genomic_DNA"/>
</dbReference>
<dbReference type="RefSeq" id="XP_011316438.1">
    <property type="nucleotide sequence ID" value="XM_011318136.1"/>
</dbReference>
<dbReference type="FunCoup" id="Q4IPX8">
    <property type="interactions" value="587"/>
</dbReference>
<dbReference type="STRING" id="229533.Q4IPX8"/>
<dbReference type="GeneID" id="23548207"/>
<dbReference type="KEGG" id="fgr:FGSG_00730"/>
<dbReference type="VEuPathDB" id="FungiDB:FGRAMPH1_01G01849"/>
<dbReference type="eggNOG" id="KOG1944">
    <property type="taxonomic scope" value="Eukaryota"/>
</dbReference>
<dbReference type="HOGENOM" id="CLU_049109_8_1_1"/>
<dbReference type="InParanoid" id="Q4IPX8"/>
<dbReference type="OrthoDB" id="3786at110618"/>
<dbReference type="Proteomes" id="UP000070720">
    <property type="component" value="Chromosome 1"/>
</dbReference>
<dbReference type="GO" id="GO:0005743">
    <property type="term" value="C:mitochondrial inner membrane"/>
    <property type="evidence" value="ECO:0007669"/>
    <property type="project" value="UniProtKB-SubCell"/>
</dbReference>
<dbReference type="InterPro" id="IPR007248">
    <property type="entry name" value="Mpv17_PMP22"/>
</dbReference>
<dbReference type="PANTHER" id="PTHR11266">
    <property type="entry name" value="PEROXISOMAL MEMBRANE PROTEIN 2, PXMP2 MPV17"/>
    <property type="match status" value="1"/>
</dbReference>
<dbReference type="PANTHER" id="PTHR11266:SF17">
    <property type="entry name" value="PROTEIN MPV17"/>
    <property type="match status" value="1"/>
</dbReference>
<dbReference type="Pfam" id="PF04117">
    <property type="entry name" value="Mpv17_PMP22"/>
    <property type="match status" value="1"/>
</dbReference>